<dbReference type="EC" id="2.7.11.1"/>
<dbReference type="EMBL" id="AAFI02000052">
    <property type="protein sequence ID" value="EAL65791.1"/>
    <property type="molecule type" value="Genomic_DNA"/>
</dbReference>
<dbReference type="RefSeq" id="XP_639149.1">
    <property type="nucleotide sequence ID" value="XM_634057.1"/>
</dbReference>
<dbReference type="SMR" id="Q54R98"/>
<dbReference type="FunCoup" id="Q54R98">
    <property type="interactions" value="2"/>
</dbReference>
<dbReference type="STRING" id="44689.Q54R98"/>
<dbReference type="PaxDb" id="44689-DDB0229335"/>
<dbReference type="EnsemblProtists" id="EAL65791">
    <property type="protein sequence ID" value="EAL65791"/>
    <property type="gene ID" value="DDB_G0283301"/>
</dbReference>
<dbReference type="GeneID" id="8624019"/>
<dbReference type="KEGG" id="ddi:DDB_G0283301"/>
<dbReference type="dictyBase" id="DDB_G0283301"/>
<dbReference type="VEuPathDB" id="AmoebaDB:DDB_G0283301"/>
<dbReference type="eggNOG" id="KOG0192">
    <property type="taxonomic scope" value="Eukaryota"/>
</dbReference>
<dbReference type="HOGENOM" id="CLU_414163_0_0_1"/>
<dbReference type="InParanoid" id="Q54R98"/>
<dbReference type="PhylomeDB" id="Q54R98"/>
<dbReference type="PRO" id="PR:Q54R98"/>
<dbReference type="Proteomes" id="UP000002195">
    <property type="component" value="Chromosome 4"/>
</dbReference>
<dbReference type="GO" id="GO:0005737">
    <property type="term" value="C:cytoplasm"/>
    <property type="evidence" value="ECO:0000318"/>
    <property type="project" value="GO_Central"/>
</dbReference>
<dbReference type="GO" id="GO:0005634">
    <property type="term" value="C:nucleus"/>
    <property type="evidence" value="ECO:0000318"/>
    <property type="project" value="GO_Central"/>
</dbReference>
<dbReference type="GO" id="GO:0005524">
    <property type="term" value="F:ATP binding"/>
    <property type="evidence" value="ECO:0007669"/>
    <property type="project" value="UniProtKB-KW"/>
</dbReference>
<dbReference type="GO" id="GO:0004694">
    <property type="term" value="F:eukaryotic translation initiation factor 2alpha kinase activity"/>
    <property type="evidence" value="ECO:0000318"/>
    <property type="project" value="GO_Central"/>
</dbReference>
<dbReference type="GO" id="GO:0106310">
    <property type="term" value="F:protein serine kinase activity"/>
    <property type="evidence" value="ECO:0007669"/>
    <property type="project" value="RHEA"/>
</dbReference>
<dbReference type="GO" id="GO:0006446">
    <property type="term" value="P:regulation of translational initiation"/>
    <property type="evidence" value="ECO:0000318"/>
    <property type="project" value="GO_Central"/>
</dbReference>
<dbReference type="Gene3D" id="3.30.200.20">
    <property type="entry name" value="Phosphorylase Kinase, domain 1"/>
    <property type="match status" value="1"/>
</dbReference>
<dbReference type="Gene3D" id="1.10.510.10">
    <property type="entry name" value="Transferase(Phosphotransferase) domain 1"/>
    <property type="match status" value="1"/>
</dbReference>
<dbReference type="InterPro" id="IPR011009">
    <property type="entry name" value="Kinase-like_dom_sf"/>
</dbReference>
<dbReference type="InterPro" id="IPR000719">
    <property type="entry name" value="Prot_kinase_dom"/>
</dbReference>
<dbReference type="InterPro" id="IPR017441">
    <property type="entry name" value="Protein_kinase_ATP_BS"/>
</dbReference>
<dbReference type="PANTHER" id="PTHR44167">
    <property type="entry name" value="OVARIAN-SPECIFIC SERINE/THREONINE-PROTEIN KINASE LOK-RELATED"/>
    <property type="match status" value="1"/>
</dbReference>
<dbReference type="PANTHER" id="PTHR44167:SF24">
    <property type="entry name" value="SERINE_THREONINE-PROTEIN KINASE CHK2"/>
    <property type="match status" value="1"/>
</dbReference>
<dbReference type="Pfam" id="PF00069">
    <property type="entry name" value="Pkinase"/>
    <property type="match status" value="1"/>
</dbReference>
<dbReference type="SMART" id="SM00220">
    <property type="entry name" value="S_TKc"/>
    <property type="match status" value="1"/>
</dbReference>
<dbReference type="SUPFAM" id="SSF56112">
    <property type="entry name" value="Protein kinase-like (PK-like)"/>
    <property type="match status" value="1"/>
</dbReference>
<dbReference type="PROSITE" id="PS00107">
    <property type="entry name" value="PROTEIN_KINASE_ATP"/>
    <property type="match status" value="1"/>
</dbReference>
<dbReference type="PROSITE" id="PS50011">
    <property type="entry name" value="PROTEIN_KINASE_DOM"/>
    <property type="match status" value="1"/>
</dbReference>
<reference key="1">
    <citation type="journal article" date="2005" name="Nature">
        <title>The genome of the social amoeba Dictyostelium discoideum.</title>
        <authorList>
            <person name="Eichinger L."/>
            <person name="Pachebat J.A."/>
            <person name="Gloeckner G."/>
            <person name="Rajandream M.A."/>
            <person name="Sucgang R."/>
            <person name="Berriman M."/>
            <person name="Song J."/>
            <person name="Olsen R."/>
            <person name="Szafranski K."/>
            <person name="Xu Q."/>
            <person name="Tunggal B."/>
            <person name="Kummerfeld S."/>
            <person name="Madera M."/>
            <person name="Konfortov B.A."/>
            <person name="Rivero F."/>
            <person name="Bankier A.T."/>
            <person name="Lehmann R."/>
            <person name="Hamlin N."/>
            <person name="Davies R."/>
            <person name="Gaudet P."/>
            <person name="Fey P."/>
            <person name="Pilcher K."/>
            <person name="Chen G."/>
            <person name="Saunders D."/>
            <person name="Sodergren E.J."/>
            <person name="Davis P."/>
            <person name="Kerhornou A."/>
            <person name="Nie X."/>
            <person name="Hall N."/>
            <person name="Anjard C."/>
            <person name="Hemphill L."/>
            <person name="Bason N."/>
            <person name="Farbrother P."/>
            <person name="Desany B."/>
            <person name="Just E."/>
            <person name="Morio T."/>
            <person name="Rost R."/>
            <person name="Churcher C.M."/>
            <person name="Cooper J."/>
            <person name="Haydock S."/>
            <person name="van Driessche N."/>
            <person name="Cronin A."/>
            <person name="Goodhead I."/>
            <person name="Muzny D.M."/>
            <person name="Mourier T."/>
            <person name="Pain A."/>
            <person name="Lu M."/>
            <person name="Harper D."/>
            <person name="Lindsay R."/>
            <person name="Hauser H."/>
            <person name="James K.D."/>
            <person name="Quiles M."/>
            <person name="Madan Babu M."/>
            <person name="Saito T."/>
            <person name="Buchrieser C."/>
            <person name="Wardroper A."/>
            <person name="Felder M."/>
            <person name="Thangavelu M."/>
            <person name="Johnson D."/>
            <person name="Knights A."/>
            <person name="Loulseged H."/>
            <person name="Mungall K.L."/>
            <person name="Oliver K."/>
            <person name="Price C."/>
            <person name="Quail M.A."/>
            <person name="Urushihara H."/>
            <person name="Hernandez J."/>
            <person name="Rabbinowitsch E."/>
            <person name="Steffen D."/>
            <person name="Sanders M."/>
            <person name="Ma J."/>
            <person name="Kohara Y."/>
            <person name="Sharp S."/>
            <person name="Simmonds M.N."/>
            <person name="Spiegler S."/>
            <person name="Tivey A."/>
            <person name="Sugano S."/>
            <person name="White B."/>
            <person name="Walker D."/>
            <person name="Woodward J.R."/>
            <person name="Winckler T."/>
            <person name="Tanaka Y."/>
            <person name="Shaulsky G."/>
            <person name="Schleicher M."/>
            <person name="Weinstock G.M."/>
            <person name="Rosenthal A."/>
            <person name="Cox E.C."/>
            <person name="Chisholm R.L."/>
            <person name="Gibbs R.A."/>
            <person name="Loomis W.F."/>
            <person name="Platzer M."/>
            <person name="Kay R.R."/>
            <person name="Williams J.G."/>
            <person name="Dear P.H."/>
            <person name="Noegel A.A."/>
            <person name="Barrell B.G."/>
            <person name="Kuspa A."/>
        </authorList>
    </citation>
    <scope>NUCLEOTIDE SEQUENCE [LARGE SCALE GENOMIC DNA]</scope>
    <source>
        <strain>AX4</strain>
    </source>
</reference>
<comment type="catalytic activity">
    <reaction>
        <text>L-seryl-[protein] + ATP = O-phospho-L-seryl-[protein] + ADP + H(+)</text>
        <dbReference type="Rhea" id="RHEA:17989"/>
        <dbReference type="Rhea" id="RHEA-COMP:9863"/>
        <dbReference type="Rhea" id="RHEA-COMP:11604"/>
        <dbReference type="ChEBI" id="CHEBI:15378"/>
        <dbReference type="ChEBI" id="CHEBI:29999"/>
        <dbReference type="ChEBI" id="CHEBI:30616"/>
        <dbReference type="ChEBI" id="CHEBI:83421"/>
        <dbReference type="ChEBI" id="CHEBI:456216"/>
        <dbReference type="EC" id="2.7.11.1"/>
    </reaction>
</comment>
<comment type="catalytic activity">
    <reaction>
        <text>L-threonyl-[protein] + ATP = O-phospho-L-threonyl-[protein] + ADP + H(+)</text>
        <dbReference type="Rhea" id="RHEA:46608"/>
        <dbReference type="Rhea" id="RHEA-COMP:11060"/>
        <dbReference type="Rhea" id="RHEA-COMP:11605"/>
        <dbReference type="ChEBI" id="CHEBI:15378"/>
        <dbReference type="ChEBI" id="CHEBI:30013"/>
        <dbReference type="ChEBI" id="CHEBI:30616"/>
        <dbReference type="ChEBI" id="CHEBI:61977"/>
        <dbReference type="ChEBI" id="CHEBI:456216"/>
        <dbReference type="EC" id="2.7.11.1"/>
    </reaction>
</comment>
<comment type="similarity">
    <text evidence="1">Belongs to the protein kinase superfamily. Ser/Thr protein kinase family.</text>
</comment>
<organism>
    <name type="scientific">Dictyostelium discoideum</name>
    <name type="common">Social amoeba</name>
    <dbReference type="NCBI Taxonomy" id="44689"/>
    <lineage>
        <taxon>Eukaryota</taxon>
        <taxon>Amoebozoa</taxon>
        <taxon>Evosea</taxon>
        <taxon>Eumycetozoa</taxon>
        <taxon>Dictyostelia</taxon>
        <taxon>Dictyosteliales</taxon>
        <taxon>Dictyosteliaceae</taxon>
        <taxon>Dictyostelium</taxon>
    </lineage>
</organism>
<sequence>MTSQNWKNCFNKKAIEVIEIHRSQETITVETVNNEDKIKNNISKPKIKVHKKPIIKSISKLKLQPKFSRYNDIIDYSIDFNCNKNYFLKQDKVSGNTFIHVFCEKRESKINLESDIENLKCLGKETIEARNNNKEIALFSTLKNQCLGLKIMHELISRNVMFIDDNGKDELLVKCLEEGRVDMVKYLITVDINLISKLKRICQITQLSLETLQFVELINSEYEKIVEIGLKSAGREYIKLFFIQFILGNFSKESIIQTIDEYKLPPIPKEIEDFFFVYNYQMCDFVKLTEIKPRYLNEISKINIYPIGQVSIERRNELGRGGNGTVYSGVLKEIDSQGNEISIPVAIKIPTQFYKSKLVEVYKELAIHQKINGICGPKLFGCVKLNVGFGIIIERFDCSLHDYIQNNNIDFDLFFELALKMVITIRNLHKCHLNEIFHRDIKPHNWLVKKTKDELVVVLSDFGLSRENSETNENTLQKYRGTSVFIPPELNDNILYNEKSDIYSLGVSFMMLLYKVVYGKMENPFYEFKISKMEYFKTVVALENFLVPIVPTFLPDSFKEFLFSTMNRIYTCRPNSEECVERLITLKTEYENDKTKWQVNSAIIQKEKSLLTDSIISQQLKLMNQVKKFVQENDKFVFLKKTKLFFSESEIKQYLLSIIKCQE</sequence>
<keyword id="KW-0067">ATP-binding</keyword>
<keyword id="KW-0418">Kinase</keyword>
<keyword id="KW-0547">Nucleotide-binding</keyword>
<keyword id="KW-1185">Reference proteome</keyword>
<keyword id="KW-0723">Serine/threonine-protein kinase</keyword>
<keyword id="KW-0808">Transferase</keyword>
<accession>Q54R98</accession>
<name>Y3301_DICDI</name>
<protein>
    <recommendedName>
        <fullName>Probable serine/threonine-protein kinase DDB_G0283301</fullName>
        <ecNumber>2.7.11.1</ecNumber>
    </recommendedName>
</protein>
<gene>
    <name type="ORF">DDB_G0283301</name>
</gene>
<proteinExistence type="inferred from homology"/>
<feature type="chain" id="PRO_0000362050" description="Probable serine/threonine-protein kinase DDB_G0283301">
    <location>
        <begin position="1"/>
        <end position="663"/>
    </location>
</feature>
<feature type="domain" description="Protein kinase" evidence="1">
    <location>
        <begin position="312"/>
        <end position="586"/>
    </location>
</feature>
<feature type="active site" description="Proton acceptor" evidence="1">
    <location>
        <position position="440"/>
    </location>
</feature>
<feature type="binding site" evidence="1">
    <location>
        <begin position="318"/>
        <end position="326"/>
    </location>
    <ligand>
        <name>ATP</name>
        <dbReference type="ChEBI" id="CHEBI:30616"/>
    </ligand>
</feature>
<feature type="binding site" evidence="1">
    <location>
        <position position="348"/>
    </location>
    <ligand>
        <name>ATP</name>
        <dbReference type="ChEBI" id="CHEBI:30616"/>
    </ligand>
</feature>
<evidence type="ECO:0000255" key="1">
    <source>
        <dbReference type="PROSITE-ProRule" id="PRU00159"/>
    </source>
</evidence>